<organism>
    <name type="scientific">Trichoplusia ni ascovirus 2c</name>
    <name type="common">TnAV-2c</name>
    <dbReference type="NCBI Taxonomy" id="328615"/>
    <lineage>
        <taxon>Viruses</taxon>
        <taxon>Varidnaviria</taxon>
        <taxon>Bamfordvirae</taxon>
        <taxon>Nucleocytoviricota</taxon>
        <taxon>Megaviricetes</taxon>
        <taxon>Pimascovirales</taxon>
        <taxon>Ascoviridae</taxon>
        <taxon>Ascovirus</taxon>
    </lineage>
</organism>
<reference key="1">
    <citation type="journal article" date="2006" name="Virology">
        <title>Sequence and organization of the Trichoplusia ni ascovirus 2c (Ascoviridae) genome.</title>
        <authorList>
            <person name="Wang L."/>
            <person name="Xue J."/>
            <person name="Seaborn C.P."/>
            <person name="Arif B.M."/>
            <person name="Cheng X.W."/>
        </authorList>
    </citation>
    <scope>NUCLEOTIDE SEQUENCE [LARGE SCALE GENOMIC DNA]</scope>
</reference>
<comment type="cofactor">
    <cofactor evidence="1">
        <name>Zn(2+)</name>
        <dbReference type="ChEBI" id="CHEBI:29105"/>
    </cofactor>
    <text evidence="1">Binds 1 zinc ion per subunit.</text>
</comment>
<comment type="similarity">
    <text evidence="4">Belongs to the peptidase M10A family.</text>
</comment>
<dbReference type="EC" id="3.4.24.-"/>
<dbReference type="EMBL" id="DQ517337">
    <property type="protein sequence ID" value="ABF70673.1"/>
    <property type="molecule type" value="Genomic_DNA"/>
</dbReference>
<dbReference type="RefSeq" id="YP_803380.1">
    <property type="nucleotide sequence ID" value="NC_008518.1"/>
</dbReference>
<dbReference type="KEGG" id="vg:5141669"/>
<dbReference type="OrthoDB" id="4353at10239"/>
<dbReference type="Proteomes" id="UP000001323">
    <property type="component" value="Genome"/>
</dbReference>
<dbReference type="GO" id="GO:0005615">
    <property type="term" value="C:extracellular space"/>
    <property type="evidence" value="ECO:0007669"/>
    <property type="project" value="TreeGrafter"/>
</dbReference>
<dbReference type="GO" id="GO:0004222">
    <property type="term" value="F:metalloendopeptidase activity"/>
    <property type="evidence" value="ECO:0007669"/>
    <property type="project" value="InterPro"/>
</dbReference>
<dbReference type="GO" id="GO:0008270">
    <property type="term" value="F:zinc ion binding"/>
    <property type="evidence" value="ECO:0007669"/>
    <property type="project" value="InterPro"/>
</dbReference>
<dbReference type="GO" id="GO:0030574">
    <property type="term" value="P:collagen catabolic process"/>
    <property type="evidence" value="ECO:0007669"/>
    <property type="project" value="TreeGrafter"/>
</dbReference>
<dbReference type="GO" id="GO:0030198">
    <property type="term" value="P:extracellular matrix organization"/>
    <property type="evidence" value="ECO:0007669"/>
    <property type="project" value="TreeGrafter"/>
</dbReference>
<dbReference type="GO" id="GO:0006508">
    <property type="term" value="P:proteolysis"/>
    <property type="evidence" value="ECO:0007669"/>
    <property type="project" value="UniProtKB-KW"/>
</dbReference>
<dbReference type="CDD" id="cd04278">
    <property type="entry name" value="ZnMc_MMP"/>
    <property type="match status" value="1"/>
</dbReference>
<dbReference type="Gene3D" id="3.40.390.10">
    <property type="entry name" value="Collagenase (Catalytic Domain)"/>
    <property type="match status" value="1"/>
</dbReference>
<dbReference type="Gene3D" id="2.110.10.10">
    <property type="entry name" value="Hemopexin-like domain"/>
    <property type="match status" value="1"/>
</dbReference>
<dbReference type="InterPro" id="IPR036375">
    <property type="entry name" value="Hemopexin-like_dom_sf"/>
</dbReference>
<dbReference type="InterPro" id="IPR018487">
    <property type="entry name" value="Hemopexin-like_repeat"/>
</dbReference>
<dbReference type="InterPro" id="IPR033739">
    <property type="entry name" value="M10A_MMP"/>
</dbReference>
<dbReference type="InterPro" id="IPR024079">
    <property type="entry name" value="MetalloPept_cat_dom_sf"/>
</dbReference>
<dbReference type="InterPro" id="IPR001818">
    <property type="entry name" value="Pept_M10_metallopeptidase"/>
</dbReference>
<dbReference type="InterPro" id="IPR021190">
    <property type="entry name" value="Pept_M10A"/>
</dbReference>
<dbReference type="InterPro" id="IPR006026">
    <property type="entry name" value="Peptidase_Metallo"/>
</dbReference>
<dbReference type="PANTHER" id="PTHR10201">
    <property type="entry name" value="MATRIX METALLOPROTEINASE"/>
    <property type="match status" value="1"/>
</dbReference>
<dbReference type="PANTHER" id="PTHR10201:SF291">
    <property type="entry name" value="MATRIX METALLOPROTEINASE 1, ISOFORM C-RELATED"/>
    <property type="match status" value="1"/>
</dbReference>
<dbReference type="Pfam" id="PF00045">
    <property type="entry name" value="Hemopexin"/>
    <property type="match status" value="1"/>
</dbReference>
<dbReference type="Pfam" id="PF00413">
    <property type="entry name" value="Peptidase_M10"/>
    <property type="match status" value="1"/>
</dbReference>
<dbReference type="PIRSF" id="PIRSF001191">
    <property type="entry name" value="Peptidase_M10A_matrix"/>
    <property type="match status" value="1"/>
</dbReference>
<dbReference type="PRINTS" id="PR00138">
    <property type="entry name" value="MATRIXIN"/>
</dbReference>
<dbReference type="SMART" id="SM00235">
    <property type="entry name" value="ZnMc"/>
    <property type="match status" value="1"/>
</dbReference>
<dbReference type="SUPFAM" id="SSF50923">
    <property type="entry name" value="Hemopexin-like domain"/>
    <property type="match status" value="1"/>
</dbReference>
<dbReference type="SUPFAM" id="SSF55486">
    <property type="entry name" value="Metalloproteases ('zincins'), catalytic domain"/>
    <property type="match status" value="1"/>
</dbReference>
<dbReference type="PROSITE" id="PS51642">
    <property type="entry name" value="HEMOPEXIN_2"/>
    <property type="match status" value="1"/>
</dbReference>
<dbReference type="PROSITE" id="PS00142">
    <property type="entry name" value="ZINC_PROTEASE"/>
    <property type="match status" value="1"/>
</dbReference>
<feature type="signal peptide" evidence="2">
    <location>
        <begin position="1"/>
        <end position="26"/>
    </location>
</feature>
<feature type="chain" id="PRO_0000330608" description="Putative matrix metalloproteinase">
    <location>
        <begin position="27"/>
        <end position="501"/>
    </location>
</feature>
<feature type="repeat" description="Hemopexin">
    <location>
        <begin position="311"/>
        <end position="356"/>
    </location>
</feature>
<feature type="active site" evidence="3">
    <location>
        <position position="180"/>
    </location>
</feature>
<feature type="binding site" evidence="3">
    <location>
        <position position="179"/>
    </location>
    <ligand>
        <name>Zn(2+)</name>
        <dbReference type="ChEBI" id="CHEBI:29105"/>
        <note>catalytic</note>
    </ligand>
</feature>
<feature type="binding site" evidence="3">
    <location>
        <position position="183"/>
    </location>
    <ligand>
        <name>Zn(2+)</name>
        <dbReference type="ChEBI" id="CHEBI:29105"/>
        <note>catalytic</note>
    </ligand>
</feature>
<feature type="binding site" evidence="3">
    <location>
        <position position="189"/>
    </location>
    <ligand>
        <name>Zn(2+)</name>
        <dbReference type="ChEBI" id="CHEBI:29105"/>
        <note>catalytic</note>
    </ligand>
</feature>
<feature type="glycosylation site" description="N-linked (GlcNAc...) asparagine; by host" evidence="2">
    <location>
        <position position="48"/>
    </location>
</feature>
<feature type="glycosylation site" description="N-linked (GlcNAc...) asparagine; by host" evidence="2">
    <location>
        <position position="58"/>
    </location>
</feature>
<feature type="glycosylation site" description="N-linked (GlcNAc...) asparagine; by host" evidence="2">
    <location>
        <position position="61"/>
    </location>
</feature>
<feature type="glycosylation site" description="N-linked (GlcNAc...) asparagine; by host" evidence="2">
    <location>
        <position position="94"/>
    </location>
</feature>
<feature type="glycosylation site" description="N-linked (GlcNAc...) asparagine; by host" evidence="2">
    <location>
        <position position="116"/>
    </location>
</feature>
<feature type="glycosylation site" description="N-linked (GlcNAc...) asparagine; by host" evidence="2">
    <location>
        <position position="163"/>
    </location>
</feature>
<feature type="glycosylation site" description="N-linked (GlcNAc...) asparagine; by host" evidence="2">
    <location>
        <position position="192"/>
    </location>
</feature>
<feature type="glycosylation site" description="N-linked (GlcNAc...) asparagine; by host" evidence="2">
    <location>
        <position position="267"/>
    </location>
</feature>
<feature type="glycosylation site" description="N-linked (GlcNAc...) asparagine; by host" evidence="2">
    <location>
        <position position="280"/>
    </location>
</feature>
<feature type="glycosylation site" description="N-linked (GlcNAc...) asparagine; by host" evidence="2">
    <location>
        <position position="291"/>
    </location>
</feature>
<feature type="glycosylation site" description="N-linked (GlcNAc...) asparagine; by host" evidence="2">
    <location>
        <position position="379"/>
    </location>
</feature>
<feature type="glycosylation site" description="N-linked (GlcNAc...) asparagine; by host" evidence="2">
    <location>
        <position position="493"/>
    </location>
</feature>
<gene>
    <name type="ORF">ORF158</name>
</gene>
<sequence length="501" mass="58710">MMPQYERKQIIIHISCVIICVVVTLTLFHVFWNDNYIAVDVNYDVPYNFSVSPDFGFNTTNITWSLKPYYKYDINDLMNTANSVFKIWSRTGLNFTYIKNVDEAMVRIYFYRQDHNDSFPFDGKGKILGHAFYPNRHRINRGLAGEVHIDADEQFYFNDKLENMSEYDDSINLHAILLHEVGHAIGLLHSANKSSIMYPYYGGSKLGVDDFNGIQQIYFANKYKHNKIFTYNKYHKLETTSSSTPSYYGNRDRYPINKKRSLSSVFNITTTTVKPSYDKNNTFTPQKICFNITSSYKTHNTKLTAIRKYCTGHIDTISVIRGELYIFVDEYHWRFRSNGLLYSGYPLKTTHSWSVPIIGRFKVTSAFETLTGDIVIGVNYTTFYYFDRMSMQLYRMQKLPLHLLPRCRSTKKTIVFSIDSHLYALCDRIIREIDFNSLRMKRMKTKRSMLGFPLVSNLITVLDHDGIYLFRNDNTYAEVIRSRVDSSSSYFKNNTDKWTIC</sequence>
<protein>
    <recommendedName>
        <fullName>Putative matrix metalloproteinase</fullName>
        <ecNumber>3.4.24.-</ecNumber>
    </recommendedName>
</protein>
<proteinExistence type="inferred from homology"/>
<evidence type="ECO:0000250" key="1"/>
<evidence type="ECO:0000255" key="2"/>
<evidence type="ECO:0000255" key="3">
    <source>
        <dbReference type="PROSITE-ProRule" id="PRU10095"/>
    </source>
</evidence>
<evidence type="ECO:0000305" key="4"/>
<accession>Q06VC5</accession>
<keyword id="KW-0325">Glycoprotein</keyword>
<keyword id="KW-0378">Hydrolase</keyword>
<keyword id="KW-0479">Metal-binding</keyword>
<keyword id="KW-0482">Metalloprotease</keyword>
<keyword id="KW-0645">Protease</keyword>
<keyword id="KW-1185">Reference proteome</keyword>
<keyword id="KW-0732">Signal</keyword>
<keyword id="KW-0862">Zinc</keyword>
<organismHost>
    <name type="scientific">Noctuidae</name>
    <name type="common">owlet moths</name>
    <dbReference type="NCBI Taxonomy" id="7100"/>
</organismHost>
<name>MMP_TNAVC</name>